<gene>
    <name evidence="1" type="primary">pgi</name>
    <name type="ordered locus">BOV_0299</name>
</gene>
<comment type="function">
    <text evidence="1">Catalyzes the reversible isomerization of glucose-6-phosphate to fructose-6-phosphate.</text>
</comment>
<comment type="catalytic activity">
    <reaction evidence="1">
        <text>alpha-D-glucose 6-phosphate = beta-D-fructose 6-phosphate</text>
        <dbReference type="Rhea" id="RHEA:11816"/>
        <dbReference type="ChEBI" id="CHEBI:57634"/>
        <dbReference type="ChEBI" id="CHEBI:58225"/>
        <dbReference type="EC" id="5.3.1.9"/>
    </reaction>
</comment>
<comment type="pathway">
    <text evidence="1">Carbohydrate biosynthesis; gluconeogenesis.</text>
</comment>
<comment type="pathway">
    <text evidence="1">Carbohydrate degradation; glycolysis; D-glyceraldehyde 3-phosphate and glycerone phosphate from D-glucose: step 2/4.</text>
</comment>
<comment type="subcellular location">
    <subcellularLocation>
        <location evidence="1">Cytoplasm</location>
    </subcellularLocation>
</comment>
<comment type="similarity">
    <text evidence="1">Belongs to the GPI family.</text>
</comment>
<organism>
    <name type="scientific">Brucella ovis (strain ATCC 25840 / 63/290 / NCTC 10512)</name>
    <dbReference type="NCBI Taxonomy" id="444178"/>
    <lineage>
        <taxon>Bacteria</taxon>
        <taxon>Pseudomonadati</taxon>
        <taxon>Pseudomonadota</taxon>
        <taxon>Alphaproteobacteria</taxon>
        <taxon>Hyphomicrobiales</taxon>
        <taxon>Brucellaceae</taxon>
        <taxon>Brucella/Ochrobactrum group</taxon>
        <taxon>Brucella</taxon>
    </lineage>
</organism>
<reference key="1">
    <citation type="journal article" date="2009" name="PLoS ONE">
        <title>Genome degradation in Brucella ovis corresponds with narrowing of its host range and tissue tropism.</title>
        <authorList>
            <person name="Tsolis R.M."/>
            <person name="Seshadri R."/>
            <person name="Santos R.L."/>
            <person name="Sangari F.J."/>
            <person name="Lobo J.M."/>
            <person name="de Jong M.F."/>
            <person name="Ren Q."/>
            <person name="Myers G."/>
            <person name="Brinkac L.M."/>
            <person name="Nelson W.C."/>
            <person name="Deboy R.T."/>
            <person name="Angiuoli S."/>
            <person name="Khouri H."/>
            <person name="Dimitrov G."/>
            <person name="Robinson J.R."/>
            <person name="Mulligan S."/>
            <person name="Walker R.L."/>
            <person name="Elzer P.E."/>
            <person name="Hassan K.A."/>
            <person name="Paulsen I.T."/>
        </authorList>
    </citation>
    <scope>NUCLEOTIDE SEQUENCE [LARGE SCALE GENOMIC DNA]</scope>
    <source>
        <strain>ATCC 25840 / 63/290 / NCTC 10512</strain>
    </source>
</reference>
<dbReference type="EC" id="5.3.1.9" evidence="1"/>
<dbReference type="EMBL" id="CP000708">
    <property type="protein sequence ID" value="ABQ60158.1"/>
    <property type="molecule type" value="Genomic_DNA"/>
</dbReference>
<dbReference type="RefSeq" id="WP_005978113.1">
    <property type="nucleotide sequence ID" value="NC_009505.1"/>
</dbReference>
<dbReference type="SMR" id="A5VNM7"/>
<dbReference type="GeneID" id="45123791"/>
<dbReference type="KEGG" id="bov:BOV_0299"/>
<dbReference type="HOGENOM" id="CLU_017947_3_1_5"/>
<dbReference type="PhylomeDB" id="A5VNM7"/>
<dbReference type="UniPathway" id="UPA00109">
    <property type="reaction ID" value="UER00181"/>
</dbReference>
<dbReference type="UniPathway" id="UPA00138"/>
<dbReference type="PRO" id="PR:A5VNM7"/>
<dbReference type="Proteomes" id="UP000006383">
    <property type="component" value="Chromosome I"/>
</dbReference>
<dbReference type="GO" id="GO:0005829">
    <property type="term" value="C:cytosol"/>
    <property type="evidence" value="ECO:0007669"/>
    <property type="project" value="TreeGrafter"/>
</dbReference>
<dbReference type="GO" id="GO:0097367">
    <property type="term" value="F:carbohydrate derivative binding"/>
    <property type="evidence" value="ECO:0007669"/>
    <property type="project" value="InterPro"/>
</dbReference>
<dbReference type="GO" id="GO:0004347">
    <property type="term" value="F:glucose-6-phosphate isomerase activity"/>
    <property type="evidence" value="ECO:0007669"/>
    <property type="project" value="UniProtKB-UniRule"/>
</dbReference>
<dbReference type="GO" id="GO:0048029">
    <property type="term" value="F:monosaccharide binding"/>
    <property type="evidence" value="ECO:0007669"/>
    <property type="project" value="TreeGrafter"/>
</dbReference>
<dbReference type="GO" id="GO:0006094">
    <property type="term" value="P:gluconeogenesis"/>
    <property type="evidence" value="ECO:0007669"/>
    <property type="project" value="UniProtKB-UniRule"/>
</dbReference>
<dbReference type="GO" id="GO:0051156">
    <property type="term" value="P:glucose 6-phosphate metabolic process"/>
    <property type="evidence" value="ECO:0007669"/>
    <property type="project" value="TreeGrafter"/>
</dbReference>
<dbReference type="GO" id="GO:0006096">
    <property type="term" value="P:glycolytic process"/>
    <property type="evidence" value="ECO:0007669"/>
    <property type="project" value="UniProtKB-UniRule"/>
</dbReference>
<dbReference type="CDD" id="cd05015">
    <property type="entry name" value="SIS_PGI_1"/>
    <property type="match status" value="1"/>
</dbReference>
<dbReference type="CDD" id="cd05016">
    <property type="entry name" value="SIS_PGI_2"/>
    <property type="match status" value="1"/>
</dbReference>
<dbReference type="FunFam" id="3.40.50.10490:FF:000018">
    <property type="entry name" value="Glucose-6-phosphate isomerase"/>
    <property type="match status" value="1"/>
</dbReference>
<dbReference type="Gene3D" id="1.10.1390.10">
    <property type="match status" value="1"/>
</dbReference>
<dbReference type="Gene3D" id="3.40.50.10490">
    <property type="entry name" value="Glucose-6-phosphate isomerase like protein, domain 1"/>
    <property type="match status" value="2"/>
</dbReference>
<dbReference type="HAMAP" id="MF_00473">
    <property type="entry name" value="G6P_isomerase"/>
    <property type="match status" value="1"/>
</dbReference>
<dbReference type="InterPro" id="IPR001672">
    <property type="entry name" value="G6P_Isomerase"/>
</dbReference>
<dbReference type="InterPro" id="IPR023096">
    <property type="entry name" value="G6P_Isomerase_C"/>
</dbReference>
<dbReference type="InterPro" id="IPR018189">
    <property type="entry name" value="Phosphoglucose_isomerase_CS"/>
</dbReference>
<dbReference type="InterPro" id="IPR046348">
    <property type="entry name" value="SIS_dom_sf"/>
</dbReference>
<dbReference type="InterPro" id="IPR035476">
    <property type="entry name" value="SIS_PGI_1"/>
</dbReference>
<dbReference type="InterPro" id="IPR035482">
    <property type="entry name" value="SIS_PGI_2"/>
</dbReference>
<dbReference type="NCBIfam" id="NF001211">
    <property type="entry name" value="PRK00179.1"/>
    <property type="match status" value="1"/>
</dbReference>
<dbReference type="PANTHER" id="PTHR11469">
    <property type="entry name" value="GLUCOSE-6-PHOSPHATE ISOMERASE"/>
    <property type="match status" value="1"/>
</dbReference>
<dbReference type="PANTHER" id="PTHR11469:SF1">
    <property type="entry name" value="GLUCOSE-6-PHOSPHATE ISOMERASE"/>
    <property type="match status" value="1"/>
</dbReference>
<dbReference type="Pfam" id="PF00342">
    <property type="entry name" value="PGI"/>
    <property type="match status" value="1"/>
</dbReference>
<dbReference type="PRINTS" id="PR00662">
    <property type="entry name" value="G6PISOMERASE"/>
</dbReference>
<dbReference type="SUPFAM" id="SSF53697">
    <property type="entry name" value="SIS domain"/>
    <property type="match status" value="1"/>
</dbReference>
<dbReference type="PROSITE" id="PS00765">
    <property type="entry name" value="P_GLUCOSE_ISOMERASE_1"/>
    <property type="match status" value="1"/>
</dbReference>
<dbReference type="PROSITE" id="PS00174">
    <property type="entry name" value="P_GLUCOSE_ISOMERASE_2"/>
    <property type="match status" value="1"/>
</dbReference>
<dbReference type="PROSITE" id="PS51463">
    <property type="entry name" value="P_GLUCOSE_ISOMERASE_3"/>
    <property type="match status" value="1"/>
</dbReference>
<evidence type="ECO:0000255" key="1">
    <source>
        <dbReference type="HAMAP-Rule" id="MF_00473"/>
    </source>
</evidence>
<keyword id="KW-0963">Cytoplasm</keyword>
<keyword id="KW-0312">Gluconeogenesis</keyword>
<keyword id="KW-0324">Glycolysis</keyword>
<keyword id="KW-0413">Isomerase</keyword>
<name>G6PI_BRUO2</name>
<sequence>MARDAAKLEATVAKLKKHWAESAPRDMRAAFSADPGRFGRYSLCLDDLLFDWSKCRVNDETMALLKELAVAADVEGRRAAMFAGEHINNTEDRAVLHVALRDTSSKEVLVDGHNVLPDVKHVLDRMAAFADGIRSGALKGATGRKITDIVNIGIGGSDLGPVMATLALAPYHDGPRAHFVSNIDGAHIADTLSPLDPASTLIIVASKTFTTIETMTNAQTARKWVADTLGEAAVGAHFAAVSTALDKVAAFGIPEDRVFGFWDWVGGRYSVWSAIGLPVMIAVGPDNFRKFLAGAHAMDVHFRDAPLEKNLPVMLGLIGYWHRAICGYGSRAIIPYDQRLSRLPAYLQQLDMESNGKSVTLDGKPVSGPTGPVVWGEPGTNGQHAFFQLLHQGTDTIPLEFIVAAKGHEPTLDHQHEMLMANCLAQSEALMKGRTLDEARAQLQAKNLPASQVERIAPHRVFSGNRPSLTLIHDMLDPYALGRLIALYEHRVFVEAQIFGINAFDQWGVELGKELATELLPVVSGKEGASGRDASTQGLVAHLHARRKA</sequence>
<feature type="chain" id="PRO_1000013944" description="Glucose-6-phosphate isomerase">
    <location>
        <begin position="1"/>
        <end position="549"/>
    </location>
</feature>
<feature type="active site" description="Proton donor" evidence="1">
    <location>
        <position position="353"/>
    </location>
</feature>
<feature type="active site" evidence="1">
    <location>
        <position position="384"/>
    </location>
</feature>
<feature type="active site" evidence="1">
    <location>
        <position position="513"/>
    </location>
</feature>
<accession>A5VNM7</accession>
<proteinExistence type="inferred from homology"/>
<protein>
    <recommendedName>
        <fullName evidence="1">Glucose-6-phosphate isomerase</fullName>
        <shortName evidence="1">GPI</shortName>
        <ecNumber evidence="1">5.3.1.9</ecNumber>
    </recommendedName>
    <alternativeName>
        <fullName evidence="1">Phosphoglucose isomerase</fullName>
        <shortName evidence="1">PGI</shortName>
    </alternativeName>
    <alternativeName>
        <fullName evidence="1">Phosphohexose isomerase</fullName>
        <shortName evidence="1">PHI</shortName>
    </alternativeName>
</protein>